<feature type="chain" id="PRO_0000171381" description="tRNA (guanine-N(7)-)-methyltransferase">
    <location>
        <begin position="1"/>
        <end position="232"/>
    </location>
</feature>
<feature type="active site" evidence="1">
    <location>
        <position position="137"/>
    </location>
</feature>
<feature type="binding site" evidence="2">
    <location>
        <position position="63"/>
    </location>
    <ligand>
        <name>S-adenosyl-L-methionine</name>
        <dbReference type="ChEBI" id="CHEBI:59789"/>
    </ligand>
</feature>
<feature type="binding site" evidence="2">
    <location>
        <position position="88"/>
    </location>
    <ligand>
        <name>S-adenosyl-L-methionine</name>
        <dbReference type="ChEBI" id="CHEBI:59789"/>
    </ligand>
</feature>
<feature type="binding site" evidence="2">
    <location>
        <position position="115"/>
    </location>
    <ligand>
        <name>S-adenosyl-L-methionine</name>
        <dbReference type="ChEBI" id="CHEBI:59789"/>
    </ligand>
</feature>
<feature type="binding site" evidence="2">
    <location>
        <position position="137"/>
    </location>
    <ligand>
        <name>S-adenosyl-L-methionine</name>
        <dbReference type="ChEBI" id="CHEBI:59789"/>
    </ligand>
</feature>
<feature type="binding site" evidence="2">
    <location>
        <position position="141"/>
    </location>
    <ligand>
        <name>substrate</name>
    </ligand>
</feature>
<feature type="binding site" evidence="2">
    <location>
        <position position="173"/>
    </location>
    <ligand>
        <name>substrate</name>
    </ligand>
</feature>
<feature type="binding site" evidence="2">
    <location>
        <begin position="211"/>
        <end position="214"/>
    </location>
    <ligand>
        <name>substrate</name>
    </ligand>
</feature>
<sequence>MTETRGARATEAFFGRRKGKPLRERQAAHLEHLLPLLKLDLEEPAPADLTALFPEPVERIRLEIGFGGGEHLIHRAAEDPATGFIGVEPFVNSMAKLLGQIEAKAIRNIRLYDDDATQVLDWLPAASVDQIDLLYPDPWPKRKHWKRRFVSQINLDRFARILKPGGLFCFASDIDSYINWTLIHCREHAAFEWTAERAADWLTPFAGWPSTRYEAKARREGRSSAYLAFRRA</sequence>
<proteinExistence type="inferred from homology"/>
<comment type="function">
    <text evidence="2">Catalyzes the formation of N(7)-methylguanine at position 46 (m7G46) in tRNA.</text>
</comment>
<comment type="catalytic activity">
    <reaction evidence="2">
        <text>guanosine(46) in tRNA + S-adenosyl-L-methionine = N(7)-methylguanosine(46) in tRNA + S-adenosyl-L-homocysteine</text>
        <dbReference type="Rhea" id="RHEA:42708"/>
        <dbReference type="Rhea" id="RHEA-COMP:10188"/>
        <dbReference type="Rhea" id="RHEA-COMP:10189"/>
        <dbReference type="ChEBI" id="CHEBI:57856"/>
        <dbReference type="ChEBI" id="CHEBI:59789"/>
        <dbReference type="ChEBI" id="CHEBI:74269"/>
        <dbReference type="ChEBI" id="CHEBI:74480"/>
        <dbReference type="EC" id="2.1.1.33"/>
    </reaction>
</comment>
<comment type="pathway">
    <text evidence="2">tRNA modification; N(7)-methylguanine-tRNA biosynthesis.</text>
</comment>
<comment type="similarity">
    <text evidence="2">Belongs to the class I-like SAM-binding methyltransferase superfamily. TrmB family.</text>
</comment>
<comment type="sequence caution" evidence="3">
    <conflict type="erroneous initiation">
        <sequence resource="EMBL-CDS" id="CAC41849"/>
    </conflict>
</comment>
<reference key="1">
    <citation type="journal article" date="2001" name="Proc. Natl. Acad. Sci. U.S.A.">
        <title>Analysis of the chromosome sequence of the legume symbiont Sinorhizobium meliloti strain 1021.</title>
        <authorList>
            <person name="Capela D."/>
            <person name="Barloy-Hubler F."/>
            <person name="Gouzy J."/>
            <person name="Bothe G."/>
            <person name="Ampe F."/>
            <person name="Batut J."/>
            <person name="Boistard P."/>
            <person name="Becker A."/>
            <person name="Boutry M."/>
            <person name="Cadieu E."/>
            <person name="Dreano S."/>
            <person name="Gloux S."/>
            <person name="Godrie T."/>
            <person name="Goffeau A."/>
            <person name="Kahn D."/>
            <person name="Kiss E."/>
            <person name="Lelaure V."/>
            <person name="Masuy D."/>
            <person name="Pohl T."/>
            <person name="Portetelle D."/>
            <person name="Puehler A."/>
            <person name="Purnelle B."/>
            <person name="Ramsperger U."/>
            <person name="Renard C."/>
            <person name="Thebault P."/>
            <person name="Vandenbol M."/>
            <person name="Weidner S."/>
            <person name="Galibert F."/>
        </authorList>
    </citation>
    <scope>NUCLEOTIDE SEQUENCE [LARGE SCALE GENOMIC DNA]</scope>
    <source>
        <strain>1021</strain>
    </source>
</reference>
<reference key="2">
    <citation type="journal article" date="2001" name="Science">
        <title>The composite genome of the legume symbiont Sinorhizobium meliloti.</title>
        <authorList>
            <person name="Galibert F."/>
            <person name="Finan T.M."/>
            <person name="Long S.R."/>
            <person name="Puehler A."/>
            <person name="Abola P."/>
            <person name="Ampe F."/>
            <person name="Barloy-Hubler F."/>
            <person name="Barnett M.J."/>
            <person name="Becker A."/>
            <person name="Boistard P."/>
            <person name="Bothe G."/>
            <person name="Boutry M."/>
            <person name="Bowser L."/>
            <person name="Buhrmester J."/>
            <person name="Cadieu E."/>
            <person name="Capela D."/>
            <person name="Chain P."/>
            <person name="Cowie A."/>
            <person name="Davis R.W."/>
            <person name="Dreano S."/>
            <person name="Federspiel N.A."/>
            <person name="Fisher R.F."/>
            <person name="Gloux S."/>
            <person name="Godrie T."/>
            <person name="Goffeau A."/>
            <person name="Golding B."/>
            <person name="Gouzy J."/>
            <person name="Gurjal M."/>
            <person name="Hernandez-Lucas I."/>
            <person name="Hong A."/>
            <person name="Huizar L."/>
            <person name="Hyman R.W."/>
            <person name="Jones T."/>
            <person name="Kahn D."/>
            <person name="Kahn M.L."/>
            <person name="Kalman S."/>
            <person name="Keating D.H."/>
            <person name="Kiss E."/>
            <person name="Komp C."/>
            <person name="Lelaure V."/>
            <person name="Masuy D."/>
            <person name="Palm C."/>
            <person name="Peck M.C."/>
            <person name="Pohl T.M."/>
            <person name="Portetelle D."/>
            <person name="Purnelle B."/>
            <person name="Ramsperger U."/>
            <person name="Surzycki R."/>
            <person name="Thebault P."/>
            <person name="Vandenbol M."/>
            <person name="Vorhoelter F.J."/>
            <person name="Weidner S."/>
            <person name="Wells D.H."/>
            <person name="Wong K."/>
            <person name="Yeh K.-C."/>
            <person name="Batut J."/>
        </authorList>
    </citation>
    <scope>NUCLEOTIDE SEQUENCE [LARGE SCALE GENOMIC DNA]</scope>
    <source>
        <strain>1021</strain>
    </source>
</reference>
<gene>
    <name evidence="2" type="primary">trmB</name>
    <name type="ordered locus">R00412</name>
    <name type="ORF">SMc01108</name>
</gene>
<accession>Q92SI3</accession>
<dbReference type="EC" id="2.1.1.33" evidence="2"/>
<dbReference type="EMBL" id="AL591688">
    <property type="protein sequence ID" value="CAC41849.1"/>
    <property type="status" value="ALT_INIT"/>
    <property type="molecule type" value="Genomic_DNA"/>
</dbReference>
<dbReference type="RefSeq" id="NP_384518.1">
    <property type="nucleotide sequence ID" value="NC_003047.1"/>
</dbReference>
<dbReference type="RefSeq" id="WP_015007103.1">
    <property type="nucleotide sequence ID" value="NC_003047.1"/>
</dbReference>
<dbReference type="SMR" id="Q92SI3"/>
<dbReference type="EnsemblBacteria" id="CAC41849">
    <property type="protein sequence ID" value="CAC41849"/>
    <property type="gene ID" value="SMc01108"/>
</dbReference>
<dbReference type="KEGG" id="sme:SMc01108"/>
<dbReference type="PATRIC" id="fig|266834.11.peg.1785"/>
<dbReference type="eggNOG" id="COG0220">
    <property type="taxonomic scope" value="Bacteria"/>
</dbReference>
<dbReference type="HOGENOM" id="CLU_050910_0_3_5"/>
<dbReference type="OrthoDB" id="9802090at2"/>
<dbReference type="UniPathway" id="UPA00989"/>
<dbReference type="Proteomes" id="UP000001976">
    <property type="component" value="Chromosome"/>
</dbReference>
<dbReference type="GO" id="GO:0043527">
    <property type="term" value="C:tRNA methyltransferase complex"/>
    <property type="evidence" value="ECO:0007669"/>
    <property type="project" value="TreeGrafter"/>
</dbReference>
<dbReference type="GO" id="GO:0008176">
    <property type="term" value="F:tRNA (guanine(46)-N7)-methyltransferase activity"/>
    <property type="evidence" value="ECO:0007669"/>
    <property type="project" value="UniProtKB-UniRule"/>
</dbReference>
<dbReference type="Gene3D" id="3.40.50.150">
    <property type="entry name" value="Vaccinia Virus protein VP39"/>
    <property type="match status" value="1"/>
</dbReference>
<dbReference type="HAMAP" id="MF_01057">
    <property type="entry name" value="tRNA_methyltr_TrmB"/>
    <property type="match status" value="1"/>
</dbReference>
<dbReference type="InterPro" id="IPR029063">
    <property type="entry name" value="SAM-dependent_MTases_sf"/>
</dbReference>
<dbReference type="InterPro" id="IPR003358">
    <property type="entry name" value="tRNA_(Gua-N-7)_MeTrfase_Trmb"/>
</dbReference>
<dbReference type="InterPro" id="IPR055361">
    <property type="entry name" value="tRNA_methyltr_TrmB_bact"/>
</dbReference>
<dbReference type="PANTHER" id="PTHR23417">
    <property type="entry name" value="3-DEOXY-D-MANNO-OCTULOSONIC-ACID TRANSFERASE/TRNA GUANINE-N 7 - -METHYLTRANSFERASE"/>
    <property type="match status" value="1"/>
</dbReference>
<dbReference type="PANTHER" id="PTHR23417:SF14">
    <property type="entry name" value="PENTACOTRIPEPTIDE-REPEAT REGION OF PRORP DOMAIN-CONTAINING PROTEIN"/>
    <property type="match status" value="1"/>
</dbReference>
<dbReference type="Pfam" id="PF02390">
    <property type="entry name" value="Methyltransf_4"/>
    <property type="match status" value="1"/>
</dbReference>
<dbReference type="SUPFAM" id="SSF53335">
    <property type="entry name" value="S-adenosyl-L-methionine-dependent methyltransferases"/>
    <property type="match status" value="1"/>
</dbReference>
<dbReference type="PROSITE" id="PS51625">
    <property type="entry name" value="SAM_MT_TRMB"/>
    <property type="match status" value="1"/>
</dbReference>
<keyword id="KW-0489">Methyltransferase</keyword>
<keyword id="KW-1185">Reference proteome</keyword>
<keyword id="KW-0949">S-adenosyl-L-methionine</keyword>
<keyword id="KW-0808">Transferase</keyword>
<keyword id="KW-0819">tRNA processing</keyword>
<name>TRMB_RHIME</name>
<evidence type="ECO:0000250" key="1"/>
<evidence type="ECO:0000255" key="2">
    <source>
        <dbReference type="HAMAP-Rule" id="MF_01057"/>
    </source>
</evidence>
<evidence type="ECO:0000305" key="3"/>
<protein>
    <recommendedName>
        <fullName evidence="2">tRNA (guanine-N(7)-)-methyltransferase</fullName>
        <ecNumber evidence="2">2.1.1.33</ecNumber>
    </recommendedName>
    <alternativeName>
        <fullName evidence="2">tRNA (guanine(46)-N(7))-methyltransferase</fullName>
    </alternativeName>
    <alternativeName>
        <fullName evidence="2">tRNA(m7G46)-methyltransferase</fullName>
    </alternativeName>
</protein>
<organism>
    <name type="scientific">Rhizobium meliloti (strain 1021)</name>
    <name type="common">Ensifer meliloti</name>
    <name type="synonym">Sinorhizobium meliloti</name>
    <dbReference type="NCBI Taxonomy" id="266834"/>
    <lineage>
        <taxon>Bacteria</taxon>
        <taxon>Pseudomonadati</taxon>
        <taxon>Pseudomonadota</taxon>
        <taxon>Alphaproteobacteria</taxon>
        <taxon>Hyphomicrobiales</taxon>
        <taxon>Rhizobiaceae</taxon>
        <taxon>Sinorhizobium/Ensifer group</taxon>
        <taxon>Sinorhizobium</taxon>
    </lineage>
</organism>